<proteinExistence type="inferred from homology"/>
<accession>Q7SB51</accession>
<dbReference type="EMBL" id="CM002238">
    <property type="protein sequence ID" value="EAA33630.2"/>
    <property type="molecule type" value="Genomic_DNA"/>
</dbReference>
<dbReference type="RefSeq" id="XP_962866.2">
    <property type="nucleotide sequence ID" value="XM_957773.3"/>
</dbReference>
<dbReference type="FunCoup" id="Q7SB51">
    <property type="interactions" value="115"/>
</dbReference>
<dbReference type="STRING" id="367110.Q7SB51"/>
<dbReference type="TCDB" id="1.A.43.2.6">
    <property type="family name" value="the camphor resistance or fluoride exporter (fluc) family"/>
</dbReference>
<dbReference type="PaxDb" id="5141-EFNCRP00000006039"/>
<dbReference type="EnsemblFungi" id="EAA33630">
    <property type="protein sequence ID" value="EAA33630"/>
    <property type="gene ID" value="NCU06262"/>
</dbReference>
<dbReference type="GeneID" id="3879005"/>
<dbReference type="KEGG" id="ncr:NCU06262"/>
<dbReference type="VEuPathDB" id="FungiDB:NCU06262"/>
<dbReference type="HOGENOM" id="CLU_030507_0_0_1"/>
<dbReference type="InParanoid" id="Q7SB51"/>
<dbReference type="OrthoDB" id="409792at2759"/>
<dbReference type="Proteomes" id="UP000001805">
    <property type="component" value="Chromosome 3, Linkage Group III"/>
</dbReference>
<dbReference type="GO" id="GO:0005886">
    <property type="term" value="C:plasma membrane"/>
    <property type="evidence" value="ECO:0000318"/>
    <property type="project" value="GO_Central"/>
</dbReference>
<dbReference type="GO" id="GO:1903425">
    <property type="term" value="F:fluoride transmembrane transporter activity"/>
    <property type="evidence" value="ECO:0000318"/>
    <property type="project" value="GO_Central"/>
</dbReference>
<dbReference type="GO" id="GO:1903424">
    <property type="term" value="P:fluoride transmembrane transport"/>
    <property type="evidence" value="ECO:0000318"/>
    <property type="project" value="GO_Central"/>
</dbReference>
<dbReference type="InterPro" id="IPR003691">
    <property type="entry name" value="FluC"/>
</dbReference>
<dbReference type="PANTHER" id="PTHR28259">
    <property type="entry name" value="FLUORIDE EXPORT PROTEIN 1-RELATED"/>
    <property type="match status" value="1"/>
</dbReference>
<dbReference type="PANTHER" id="PTHR28259:SF1">
    <property type="entry name" value="FLUORIDE EXPORT PROTEIN 1-RELATED"/>
    <property type="match status" value="1"/>
</dbReference>
<dbReference type="Pfam" id="PF02537">
    <property type="entry name" value="CRCB"/>
    <property type="match status" value="2"/>
</dbReference>
<reference key="1">
    <citation type="journal article" date="2003" name="Nature">
        <title>The genome sequence of the filamentous fungus Neurospora crassa.</title>
        <authorList>
            <person name="Galagan J.E."/>
            <person name="Calvo S.E."/>
            <person name="Borkovich K.A."/>
            <person name="Selker E.U."/>
            <person name="Read N.D."/>
            <person name="Jaffe D.B."/>
            <person name="FitzHugh W."/>
            <person name="Ma L.-J."/>
            <person name="Smirnov S."/>
            <person name="Purcell S."/>
            <person name="Rehman B."/>
            <person name="Elkins T."/>
            <person name="Engels R."/>
            <person name="Wang S."/>
            <person name="Nielsen C.B."/>
            <person name="Butler J."/>
            <person name="Endrizzi M."/>
            <person name="Qui D."/>
            <person name="Ianakiev P."/>
            <person name="Bell-Pedersen D."/>
            <person name="Nelson M.A."/>
            <person name="Werner-Washburne M."/>
            <person name="Selitrennikoff C.P."/>
            <person name="Kinsey J.A."/>
            <person name="Braun E.L."/>
            <person name="Zelter A."/>
            <person name="Schulte U."/>
            <person name="Kothe G.O."/>
            <person name="Jedd G."/>
            <person name="Mewes H.-W."/>
            <person name="Staben C."/>
            <person name="Marcotte E."/>
            <person name="Greenberg D."/>
            <person name="Roy A."/>
            <person name="Foley K."/>
            <person name="Naylor J."/>
            <person name="Stange-Thomann N."/>
            <person name="Barrett R."/>
            <person name="Gnerre S."/>
            <person name="Kamal M."/>
            <person name="Kamvysselis M."/>
            <person name="Mauceli E.W."/>
            <person name="Bielke C."/>
            <person name="Rudd S."/>
            <person name="Frishman D."/>
            <person name="Krystofova S."/>
            <person name="Rasmussen C."/>
            <person name="Metzenberg R.L."/>
            <person name="Perkins D.D."/>
            <person name="Kroken S."/>
            <person name="Cogoni C."/>
            <person name="Macino G."/>
            <person name="Catcheside D.E.A."/>
            <person name="Li W."/>
            <person name="Pratt R.J."/>
            <person name="Osmani S.A."/>
            <person name="DeSouza C.P.C."/>
            <person name="Glass N.L."/>
            <person name="Orbach M.J."/>
            <person name="Berglund J.A."/>
            <person name="Voelker R."/>
            <person name="Yarden O."/>
            <person name="Plamann M."/>
            <person name="Seiler S."/>
            <person name="Dunlap J.C."/>
            <person name="Radford A."/>
            <person name="Aramayo R."/>
            <person name="Natvig D.O."/>
            <person name="Alex L.A."/>
            <person name="Mannhaupt G."/>
            <person name="Ebbole D.J."/>
            <person name="Freitag M."/>
            <person name="Paulsen I."/>
            <person name="Sachs M.S."/>
            <person name="Lander E.S."/>
            <person name="Nusbaum C."/>
            <person name="Birren B.W."/>
        </authorList>
    </citation>
    <scope>NUCLEOTIDE SEQUENCE [LARGE SCALE GENOMIC DNA]</scope>
    <source>
        <strain>ATCC 24698 / 74-OR23-1A / CBS 708.71 / DSM 1257 / FGSC 987</strain>
    </source>
</reference>
<reference key="2">
    <citation type="journal article" date="2013" name="Proc. Natl. Acad. Sci. U.S.A.">
        <title>Eukaryotic resistance to fluoride toxicity mediated by a widespread family of fluoride export proteins.</title>
        <authorList>
            <person name="Li S."/>
            <person name="Smith K.D."/>
            <person name="Davis J.H."/>
            <person name="Gordon P.B."/>
            <person name="Breaker R.R."/>
            <person name="Strobel S.A."/>
        </authorList>
    </citation>
    <scope>FUNCTION</scope>
    <scope>DISRUPTION PHENOTYPE</scope>
</reference>
<evidence type="ECO:0000250" key="1">
    <source>
        <dbReference type="UniProtKB" id="Q08913"/>
    </source>
</evidence>
<evidence type="ECO:0000255" key="2"/>
<evidence type="ECO:0000256" key="3">
    <source>
        <dbReference type="SAM" id="MobiDB-lite"/>
    </source>
</evidence>
<evidence type="ECO:0000269" key="4">
    <source>
    </source>
</evidence>
<evidence type="ECO:0000303" key="5">
    <source>
    </source>
</evidence>
<evidence type="ECO:0000305" key="6"/>
<evidence type="ECO:0000305" key="7">
    <source>
    </source>
</evidence>
<gene>
    <name evidence="5" type="primary">fex-1</name>
    <name type="ORF">NCU06262</name>
</gene>
<feature type="chain" id="PRO_0000437222" description="Fluoride export protein 1">
    <location>
        <begin position="1"/>
        <end position="526"/>
    </location>
</feature>
<feature type="topological domain" description="Cytoplasmic" evidence="1">
    <location>
        <begin position="1"/>
        <end position="159"/>
    </location>
</feature>
<feature type="transmembrane region" description="Helical" evidence="2">
    <location>
        <begin position="160"/>
        <end position="180"/>
    </location>
</feature>
<feature type="topological domain" description="Extracellular" evidence="1">
    <location>
        <begin position="181"/>
        <end position="194"/>
    </location>
</feature>
<feature type="transmembrane region" description="Helical" evidence="2">
    <location>
        <begin position="195"/>
        <end position="215"/>
    </location>
</feature>
<feature type="topological domain" description="Cytoplasmic" evidence="1">
    <location>
        <begin position="216"/>
        <end position="260"/>
    </location>
</feature>
<feature type="transmembrane region" description="Helical" evidence="2">
    <location>
        <begin position="261"/>
        <end position="281"/>
    </location>
</feature>
<feature type="topological domain" description="Extracellular" evidence="1">
    <location>
        <begin position="282"/>
        <end position="310"/>
    </location>
</feature>
<feature type="transmembrane region" description="Helical" evidence="2">
    <location>
        <begin position="311"/>
        <end position="331"/>
    </location>
</feature>
<feature type="topological domain" description="Cytoplasmic" evidence="1">
    <location>
        <begin position="332"/>
        <end position="361"/>
    </location>
</feature>
<feature type="transmembrane region" description="Helical" evidence="2">
    <location>
        <begin position="362"/>
        <end position="382"/>
    </location>
</feature>
<feature type="topological domain" description="Extracellular" evidence="1">
    <location>
        <begin position="383"/>
        <end position="398"/>
    </location>
</feature>
<feature type="transmembrane region" description="Helical" evidence="2">
    <location>
        <begin position="399"/>
        <end position="419"/>
    </location>
</feature>
<feature type="topological domain" description="Cytoplasmic" evidence="1">
    <location>
        <begin position="420"/>
        <end position="424"/>
    </location>
</feature>
<feature type="transmembrane region" description="Helical" evidence="2">
    <location>
        <begin position="425"/>
        <end position="445"/>
    </location>
</feature>
<feature type="topological domain" description="Extracellular" evidence="1">
    <location>
        <begin position="446"/>
        <end position="452"/>
    </location>
</feature>
<feature type="transmembrane region" description="Helical" evidence="2">
    <location>
        <begin position="453"/>
        <end position="473"/>
    </location>
</feature>
<feature type="topological domain" description="Cytoplasmic" evidence="1">
    <location>
        <begin position="474"/>
        <end position="492"/>
    </location>
</feature>
<feature type="transmembrane region" description="Helical" evidence="2">
    <location>
        <begin position="493"/>
        <end position="513"/>
    </location>
</feature>
<feature type="topological domain" description="Extracellular" evidence="1">
    <location>
        <begin position="514"/>
        <end position="526"/>
    </location>
</feature>
<feature type="region of interest" description="Disordered" evidence="3">
    <location>
        <begin position="1"/>
        <end position="73"/>
    </location>
</feature>
<feature type="region of interest" description="Disordered" evidence="3">
    <location>
        <begin position="90"/>
        <end position="149"/>
    </location>
</feature>
<feature type="region of interest" description="Disordered" evidence="3">
    <location>
        <begin position="223"/>
        <end position="242"/>
    </location>
</feature>
<feature type="compositionally biased region" description="Basic and acidic residues" evidence="3">
    <location>
        <begin position="21"/>
        <end position="36"/>
    </location>
</feature>
<feature type="compositionally biased region" description="Basic and acidic residues" evidence="3">
    <location>
        <begin position="103"/>
        <end position="123"/>
    </location>
</feature>
<name>FEX1_NEUCR</name>
<protein>
    <recommendedName>
        <fullName evidence="5">Fluoride export protein 1</fullName>
    </recommendedName>
</protein>
<comment type="function">
    <text evidence="4">Fluoride channel required for the rapid expulsion of cytoplasmic fluoride.</text>
</comment>
<comment type="catalytic activity">
    <reaction evidence="7">
        <text>fluoride(in) = fluoride(out)</text>
        <dbReference type="Rhea" id="RHEA:76159"/>
        <dbReference type="ChEBI" id="CHEBI:17051"/>
    </reaction>
    <physiologicalReaction direction="left-to-right" evidence="7">
        <dbReference type="Rhea" id="RHEA:76160"/>
    </physiologicalReaction>
</comment>
<comment type="subcellular location">
    <subcellularLocation>
        <location evidence="1">Cell membrane</location>
        <topology evidence="2">Multi-pass membrane protein</topology>
    </subcellularLocation>
</comment>
<comment type="disruption phenotype">
    <text evidence="4">Highly sensible to fluoride. Growth is inhibited at a 200-fold lower fluoride concentration than in the wild-type.</text>
</comment>
<comment type="similarity">
    <text evidence="6">Belongs to the fluoride channel Fluc/FEX (TC 1.A.43) family.</text>
</comment>
<sequence length="526" mass="57329">MMTAPSDTEGYTGGQGDSPDSPDRNRQRNLVDDHNHNQGQDDGYSQGHVTGTGLHPLHQSQGRYPRASSRRASAAPLNYDVPDDYAHLEASNISPVQNPDEDPITRLDTLERVRTRDRDYLREQRRKPLPPPQEPESSAEDYEREKQAGVVAKRQKVSRLATELYTISYLIFFSLLGTLARLGLQALTSAYPQSPIIFPSIWPNFAGCVVMGFLAEDRMLFRPDWGQQQPNPKKDDDDDEEAKDIDPAAAKKAHMALKKTIPLYVGLATGFCGSFTSFSSFIRDIYLALSNDLAAHGSSAAPVSRNGGYSFMALLAVTITTISLSLSGLFAGAHLAIAIATLFTRFDLGLPYTFVSRILDRLIVLLGFGCWLGAVLLSIWPPDRHSAQPEKERWRGTATFALVFAPLGCLTRFYASAHLNGRLPSFPLGTFVVNMLGTAVLGMAWDLNHVPSLGGVVGCQVLQGVADGFCGCLTTVSTWVSELAALRRRHAYVYGGASVGGGLALMVVVMGSLRWTEGFGEVKCIS</sequence>
<organism>
    <name type="scientific">Neurospora crassa (strain ATCC 24698 / 74-OR23-1A / CBS 708.71 / DSM 1257 / FGSC 987)</name>
    <dbReference type="NCBI Taxonomy" id="367110"/>
    <lineage>
        <taxon>Eukaryota</taxon>
        <taxon>Fungi</taxon>
        <taxon>Dikarya</taxon>
        <taxon>Ascomycota</taxon>
        <taxon>Pezizomycotina</taxon>
        <taxon>Sordariomycetes</taxon>
        <taxon>Sordariomycetidae</taxon>
        <taxon>Sordariales</taxon>
        <taxon>Sordariaceae</taxon>
        <taxon>Neurospora</taxon>
    </lineage>
</organism>
<keyword id="KW-1003">Cell membrane</keyword>
<keyword id="KW-0472">Membrane</keyword>
<keyword id="KW-1185">Reference proteome</keyword>
<keyword id="KW-0812">Transmembrane</keyword>
<keyword id="KW-1133">Transmembrane helix</keyword>